<sequence>MSKNHQKVVLVGDGQVGSAYAYALVQQGLAEELAIVNLSKEQAEGDALDLEDATVFTAPKQVYQADHHACADADLVVICAGAAQKPGETRLDLVGKNLEIMKQITKSIMATGFDGILLLATNPVDVLTYAVQKISGLPASRVISSGTSLDSARLRIALAKKLGVSPLDISANVMAEHGDSEFAAYSSATVGGKPLLQICEEQGISNDELLKIEDDVRHKAYEIINRKGFTAYGVATCLMRITRAILRDENAVLPVGAYIDGEYGIKDNYLGTPAVINASGISKVIEVPLNERESEAMTKSAEALKKIATDGMTKVGLVNYLIK</sequence>
<accession>Q8GMJ0</accession>
<comment type="function">
    <text evidence="1">Catalyzes the conversion of lactate to pyruvate.</text>
</comment>
<comment type="catalytic activity">
    <reaction evidence="1">
        <text>(S)-lactate + NAD(+) = pyruvate + NADH + H(+)</text>
        <dbReference type="Rhea" id="RHEA:23444"/>
        <dbReference type="ChEBI" id="CHEBI:15361"/>
        <dbReference type="ChEBI" id="CHEBI:15378"/>
        <dbReference type="ChEBI" id="CHEBI:16651"/>
        <dbReference type="ChEBI" id="CHEBI:57540"/>
        <dbReference type="ChEBI" id="CHEBI:57945"/>
        <dbReference type="EC" id="1.1.1.27"/>
    </reaction>
</comment>
<comment type="pathway">
    <text evidence="1">Fermentation; pyruvate fermentation to lactate; (S)-lactate from pyruvate: step 1/1.</text>
</comment>
<comment type="subunit">
    <text evidence="1">Homotetramer.</text>
</comment>
<comment type="subcellular location">
    <subcellularLocation>
        <location evidence="1">Cytoplasm</location>
    </subcellularLocation>
</comment>
<comment type="similarity">
    <text evidence="1">Belongs to the LDH/MDH superfamily. LDH family.</text>
</comment>
<proteinExistence type="inferred from homology"/>
<gene>
    <name evidence="1" type="primary">ldh</name>
    <name type="synonym">lldH</name>
</gene>
<dbReference type="EC" id="1.1.1.27" evidence="1"/>
<dbReference type="EMBL" id="AY046324">
    <property type="protein sequence ID" value="AAL03944.1"/>
    <property type="molecule type" value="Genomic_DNA"/>
</dbReference>
<dbReference type="SMR" id="Q8GMJ0"/>
<dbReference type="UniPathway" id="UPA00554">
    <property type="reaction ID" value="UER00611"/>
</dbReference>
<dbReference type="GO" id="GO:0005737">
    <property type="term" value="C:cytoplasm"/>
    <property type="evidence" value="ECO:0007669"/>
    <property type="project" value="UniProtKB-SubCell"/>
</dbReference>
<dbReference type="GO" id="GO:0004459">
    <property type="term" value="F:L-lactate dehydrogenase activity"/>
    <property type="evidence" value="ECO:0007669"/>
    <property type="project" value="UniProtKB-UniRule"/>
</dbReference>
<dbReference type="GO" id="GO:0006096">
    <property type="term" value="P:glycolytic process"/>
    <property type="evidence" value="ECO:0007669"/>
    <property type="project" value="UniProtKB-UniRule"/>
</dbReference>
<dbReference type="GO" id="GO:0006089">
    <property type="term" value="P:lactate metabolic process"/>
    <property type="evidence" value="ECO:0007669"/>
    <property type="project" value="TreeGrafter"/>
</dbReference>
<dbReference type="CDD" id="cd05291">
    <property type="entry name" value="HicDH_like"/>
    <property type="match status" value="1"/>
</dbReference>
<dbReference type="FunFam" id="3.40.50.720:FF:000018">
    <property type="entry name" value="Malate dehydrogenase"/>
    <property type="match status" value="1"/>
</dbReference>
<dbReference type="Gene3D" id="3.90.110.10">
    <property type="entry name" value="Lactate dehydrogenase/glycoside hydrolase, family 4, C-terminal"/>
    <property type="match status" value="1"/>
</dbReference>
<dbReference type="Gene3D" id="3.40.50.720">
    <property type="entry name" value="NAD(P)-binding Rossmann-like Domain"/>
    <property type="match status" value="1"/>
</dbReference>
<dbReference type="HAMAP" id="MF_00488">
    <property type="entry name" value="Lactate_dehydrog"/>
    <property type="match status" value="1"/>
</dbReference>
<dbReference type="InterPro" id="IPR001557">
    <property type="entry name" value="L-lactate/malate_DH"/>
</dbReference>
<dbReference type="InterPro" id="IPR011304">
    <property type="entry name" value="L-lactate_DH"/>
</dbReference>
<dbReference type="InterPro" id="IPR022383">
    <property type="entry name" value="Lactate/malate_DH_C"/>
</dbReference>
<dbReference type="InterPro" id="IPR001236">
    <property type="entry name" value="Lactate/malate_DH_N"/>
</dbReference>
<dbReference type="InterPro" id="IPR015955">
    <property type="entry name" value="Lactate_DH/Glyco_Ohase_4_C"/>
</dbReference>
<dbReference type="InterPro" id="IPR036291">
    <property type="entry name" value="NAD(P)-bd_dom_sf"/>
</dbReference>
<dbReference type="NCBIfam" id="TIGR01771">
    <property type="entry name" value="L-LDH-NAD"/>
    <property type="match status" value="1"/>
</dbReference>
<dbReference type="NCBIfam" id="NF000824">
    <property type="entry name" value="PRK00066.1"/>
    <property type="match status" value="1"/>
</dbReference>
<dbReference type="PANTHER" id="PTHR43128">
    <property type="entry name" value="L-2-HYDROXYCARBOXYLATE DEHYDROGENASE (NAD(P)(+))"/>
    <property type="match status" value="1"/>
</dbReference>
<dbReference type="PANTHER" id="PTHR43128:SF16">
    <property type="entry name" value="L-LACTATE DEHYDROGENASE"/>
    <property type="match status" value="1"/>
</dbReference>
<dbReference type="Pfam" id="PF02866">
    <property type="entry name" value="Ldh_1_C"/>
    <property type="match status" value="1"/>
</dbReference>
<dbReference type="Pfam" id="PF00056">
    <property type="entry name" value="Ldh_1_N"/>
    <property type="match status" value="1"/>
</dbReference>
<dbReference type="PIRSF" id="PIRSF000102">
    <property type="entry name" value="Lac_mal_DH"/>
    <property type="match status" value="1"/>
</dbReference>
<dbReference type="PRINTS" id="PR00086">
    <property type="entry name" value="LLDHDRGNASE"/>
</dbReference>
<dbReference type="SUPFAM" id="SSF56327">
    <property type="entry name" value="LDH C-terminal domain-like"/>
    <property type="match status" value="1"/>
</dbReference>
<dbReference type="SUPFAM" id="SSF51735">
    <property type="entry name" value="NAD(P)-binding Rossmann-fold domains"/>
    <property type="match status" value="1"/>
</dbReference>
<reference key="1">
    <citation type="journal article" date="2002" name="J. Microbiol. Biotechnol.">
        <title>Molecular cloning and characterization of L-lactate dehydrogenase gene (ldlH) from Lactobacillus reuteeri ATCC 55739.</title>
        <authorList>
            <person name="Park J.Y."/>
            <person name="Park S.J."/>
            <person name="Nim S.J."/>
            <person name="Ha Y.L."/>
            <person name="Kim J.H."/>
        </authorList>
    </citation>
    <scope>NUCLEOTIDE SEQUENCE [GENOMIC DNA]</scope>
    <source>
        <strain>ATCC 55739 / PYR8</strain>
    </source>
</reference>
<feature type="chain" id="PRO_0000168359" description="L-lactate dehydrogenase">
    <location>
        <begin position="1"/>
        <end position="323"/>
    </location>
</feature>
<feature type="active site" description="Proton acceptor" evidence="1">
    <location>
        <position position="177"/>
    </location>
</feature>
<feature type="binding site" evidence="1">
    <location>
        <position position="16"/>
    </location>
    <ligand>
        <name>NAD(+)</name>
        <dbReference type="ChEBI" id="CHEBI:57540"/>
    </ligand>
</feature>
<feature type="binding site" evidence="1">
    <location>
        <position position="37"/>
    </location>
    <ligand>
        <name>NAD(+)</name>
        <dbReference type="ChEBI" id="CHEBI:57540"/>
    </ligand>
</feature>
<feature type="binding site" evidence="1">
    <location>
        <begin position="81"/>
        <end position="82"/>
    </location>
    <ligand>
        <name>NAD(+)</name>
        <dbReference type="ChEBI" id="CHEBI:57540"/>
    </ligand>
</feature>
<feature type="binding site" evidence="1">
    <location>
        <position position="84"/>
    </location>
    <ligand>
        <name>substrate</name>
    </ligand>
</feature>
<feature type="binding site" evidence="1">
    <location>
        <position position="90"/>
    </location>
    <ligand>
        <name>substrate</name>
    </ligand>
</feature>
<feature type="binding site" evidence="1">
    <location>
        <begin position="120"/>
        <end position="122"/>
    </location>
    <ligand>
        <name>NAD(+)</name>
        <dbReference type="ChEBI" id="CHEBI:57540"/>
    </ligand>
</feature>
<feature type="binding site" evidence="1">
    <location>
        <begin position="122"/>
        <end position="125"/>
    </location>
    <ligand>
        <name>substrate</name>
    </ligand>
</feature>
<feature type="binding site" evidence="1">
    <location>
        <position position="145"/>
    </location>
    <ligand>
        <name>NAD(+)</name>
        <dbReference type="ChEBI" id="CHEBI:57540"/>
    </ligand>
</feature>
<feature type="binding site" evidence="1">
    <location>
        <begin position="150"/>
        <end position="153"/>
    </location>
    <ligand>
        <name>substrate</name>
    </ligand>
</feature>
<feature type="binding site" evidence="1">
    <location>
        <position position="230"/>
    </location>
    <ligand>
        <name>substrate</name>
    </ligand>
</feature>
<feature type="modified residue" description="Phosphotyrosine" evidence="1">
    <location>
        <position position="221"/>
    </location>
</feature>
<name>LDH_LIMRT</name>
<evidence type="ECO:0000255" key="1">
    <source>
        <dbReference type="HAMAP-Rule" id="MF_00488"/>
    </source>
</evidence>
<keyword id="KW-0963">Cytoplasm</keyword>
<keyword id="KW-0520">NAD</keyword>
<keyword id="KW-0560">Oxidoreductase</keyword>
<keyword id="KW-0597">Phosphoprotein</keyword>
<organism>
    <name type="scientific">Limosilactobacillus reuteri</name>
    <name type="common">Lactobacillus reuteri</name>
    <dbReference type="NCBI Taxonomy" id="1598"/>
    <lineage>
        <taxon>Bacteria</taxon>
        <taxon>Bacillati</taxon>
        <taxon>Bacillota</taxon>
        <taxon>Bacilli</taxon>
        <taxon>Lactobacillales</taxon>
        <taxon>Lactobacillaceae</taxon>
        <taxon>Limosilactobacillus</taxon>
    </lineage>
</organism>
<protein>
    <recommendedName>
        <fullName evidence="1">L-lactate dehydrogenase</fullName>
        <shortName evidence="1">L-LDH</shortName>
        <ecNumber evidence="1">1.1.1.27</ecNumber>
    </recommendedName>
</protein>